<accession>A2BUC1</accession>
<protein>
    <recommendedName>
        <fullName evidence="1">NAD(P)H-quinone oxidoreductase subunit M</fullName>
        <ecNumber evidence="1">7.1.1.-</ecNumber>
    </recommendedName>
    <alternativeName>
        <fullName evidence="1">NAD(P)H dehydrogenase I subunit M</fullName>
        <shortName evidence="1">NDH-1 subunit M</shortName>
        <shortName evidence="1">NDH-M</shortName>
    </alternativeName>
</protein>
<reference key="1">
    <citation type="journal article" date="2007" name="PLoS Genet.">
        <title>Patterns and implications of gene gain and loss in the evolution of Prochlorococcus.</title>
        <authorList>
            <person name="Kettler G.C."/>
            <person name="Martiny A.C."/>
            <person name="Huang K."/>
            <person name="Zucker J."/>
            <person name="Coleman M.L."/>
            <person name="Rodrigue S."/>
            <person name="Chen F."/>
            <person name="Lapidus A."/>
            <person name="Ferriera S."/>
            <person name="Johnson J."/>
            <person name="Steglich C."/>
            <person name="Church G.M."/>
            <person name="Richardson P."/>
            <person name="Chisholm S.W."/>
        </authorList>
    </citation>
    <scope>NUCLEOTIDE SEQUENCE [LARGE SCALE GENOMIC DNA]</scope>
    <source>
        <strain>MIT 9515</strain>
    </source>
</reference>
<feature type="chain" id="PRO_0000352193" description="NAD(P)H-quinone oxidoreductase subunit M">
    <location>
        <begin position="1"/>
        <end position="115"/>
    </location>
</feature>
<gene>
    <name evidence="1" type="primary">ndhM</name>
    <name type="ordered locus">P9515_01731</name>
</gene>
<keyword id="KW-0472">Membrane</keyword>
<keyword id="KW-0520">NAD</keyword>
<keyword id="KW-0521">NADP</keyword>
<keyword id="KW-0618">Plastoquinone</keyword>
<keyword id="KW-0874">Quinone</keyword>
<keyword id="KW-0793">Thylakoid</keyword>
<keyword id="KW-1278">Translocase</keyword>
<keyword id="KW-0813">Transport</keyword>
<dbReference type="EC" id="7.1.1.-" evidence="1"/>
<dbReference type="EMBL" id="CP000552">
    <property type="protein sequence ID" value="ABM71382.1"/>
    <property type="molecule type" value="Genomic_DNA"/>
</dbReference>
<dbReference type="RefSeq" id="WP_011819496.1">
    <property type="nucleotide sequence ID" value="NC_008817.1"/>
</dbReference>
<dbReference type="SMR" id="A2BUC1"/>
<dbReference type="STRING" id="167542.P9515_01731"/>
<dbReference type="GeneID" id="60200774"/>
<dbReference type="KEGG" id="pmc:P9515_01731"/>
<dbReference type="eggNOG" id="ENOG5031AQM">
    <property type="taxonomic scope" value="Bacteria"/>
</dbReference>
<dbReference type="HOGENOM" id="CLU_137431_0_0_3"/>
<dbReference type="OrthoDB" id="461686at2"/>
<dbReference type="Proteomes" id="UP000001589">
    <property type="component" value="Chromosome"/>
</dbReference>
<dbReference type="GO" id="GO:0031676">
    <property type="term" value="C:plasma membrane-derived thylakoid membrane"/>
    <property type="evidence" value="ECO:0007669"/>
    <property type="project" value="UniProtKB-SubCell"/>
</dbReference>
<dbReference type="GO" id="GO:0016655">
    <property type="term" value="F:oxidoreductase activity, acting on NAD(P)H, quinone or similar compound as acceptor"/>
    <property type="evidence" value="ECO:0007669"/>
    <property type="project" value="UniProtKB-UniRule"/>
</dbReference>
<dbReference type="GO" id="GO:0048038">
    <property type="term" value="F:quinone binding"/>
    <property type="evidence" value="ECO:0007669"/>
    <property type="project" value="UniProtKB-KW"/>
</dbReference>
<dbReference type="HAMAP" id="MF_01352">
    <property type="entry name" value="NDH1_NDH1M"/>
    <property type="match status" value="1"/>
</dbReference>
<dbReference type="InterPro" id="IPR018922">
    <property type="entry name" value="NdhM"/>
</dbReference>
<dbReference type="PANTHER" id="PTHR36900">
    <property type="entry name" value="NAD(P)H-QUINONE OXIDOREDUCTASE SUBUNIT M, CHLOROPLASTIC"/>
    <property type="match status" value="1"/>
</dbReference>
<dbReference type="PANTHER" id="PTHR36900:SF1">
    <property type="entry name" value="NAD(P)H-QUINONE OXIDOREDUCTASE SUBUNIT M, CHLOROPLASTIC"/>
    <property type="match status" value="1"/>
</dbReference>
<dbReference type="Pfam" id="PF10664">
    <property type="entry name" value="NdhM"/>
    <property type="match status" value="1"/>
</dbReference>
<comment type="function">
    <text evidence="1">NDH-1 shuttles electrons from an unknown electron donor, via FMN and iron-sulfur (Fe-S) centers, to quinones in the respiratory and/or the photosynthetic chain. The immediate electron acceptor for the enzyme in this species is believed to be plastoquinone. Couples the redox reaction to proton translocation, and thus conserves the redox energy in a proton gradient. Cyanobacterial NDH-1 also plays a role in inorganic carbon-concentration.</text>
</comment>
<comment type="catalytic activity">
    <reaction evidence="1">
        <text>a plastoquinone + NADH + (n+1) H(+)(in) = a plastoquinol + NAD(+) + n H(+)(out)</text>
        <dbReference type="Rhea" id="RHEA:42608"/>
        <dbReference type="Rhea" id="RHEA-COMP:9561"/>
        <dbReference type="Rhea" id="RHEA-COMP:9562"/>
        <dbReference type="ChEBI" id="CHEBI:15378"/>
        <dbReference type="ChEBI" id="CHEBI:17757"/>
        <dbReference type="ChEBI" id="CHEBI:57540"/>
        <dbReference type="ChEBI" id="CHEBI:57945"/>
        <dbReference type="ChEBI" id="CHEBI:62192"/>
    </reaction>
</comment>
<comment type="catalytic activity">
    <reaction evidence="1">
        <text>a plastoquinone + NADPH + (n+1) H(+)(in) = a plastoquinol + NADP(+) + n H(+)(out)</text>
        <dbReference type="Rhea" id="RHEA:42612"/>
        <dbReference type="Rhea" id="RHEA-COMP:9561"/>
        <dbReference type="Rhea" id="RHEA-COMP:9562"/>
        <dbReference type="ChEBI" id="CHEBI:15378"/>
        <dbReference type="ChEBI" id="CHEBI:17757"/>
        <dbReference type="ChEBI" id="CHEBI:57783"/>
        <dbReference type="ChEBI" id="CHEBI:58349"/>
        <dbReference type="ChEBI" id="CHEBI:62192"/>
    </reaction>
</comment>
<comment type="subunit">
    <text evidence="1">NDH-1 can be composed of about 15 different subunits; different subcomplexes with different compositions have been identified which probably have different functions.</text>
</comment>
<comment type="subcellular location">
    <subcellularLocation>
        <location evidence="1">Cellular thylakoid membrane</location>
        <topology evidence="1">Peripheral membrane protein</topology>
        <orientation evidence="1">Cytoplasmic side</orientation>
    </subcellularLocation>
</comment>
<comment type="similarity">
    <text evidence="1">Belongs to the complex I NdhM subunit family.</text>
</comment>
<sequence>MEKMLLKSTTRHVRIFTAEVVNNDLKYHPNKLTLDLDPDNEFIWNEESLKKVNQKFTELVEERAGKSLDDYELRKIGSEVEGLIKYLLQNSLLSYNPECRVMNYSMGLPKTKEVL</sequence>
<proteinExistence type="inferred from homology"/>
<organism>
    <name type="scientific">Prochlorococcus marinus (strain MIT 9515)</name>
    <dbReference type="NCBI Taxonomy" id="167542"/>
    <lineage>
        <taxon>Bacteria</taxon>
        <taxon>Bacillati</taxon>
        <taxon>Cyanobacteriota</taxon>
        <taxon>Cyanophyceae</taxon>
        <taxon>Synechococcales</taxon>
        <taxon>Prochlorococcaceae</taxon>
        <taxon>Prochlorococcus</taxon>
    </lineage>
</organism>
<name>NDHM_PROM5</name>
<evidence type="ECO:0000255" key="1">
    <source>
        <dbReference type="HAMAP-Rule" id="MF_01352"/>
    </source>
</evidence>